<gene>
    <name evidence="1" type="primary">argH</name>
    <name type="ordered locus">A9601_00111</name>
</gene>
<name>ARLY_PROMS</name>
<keyword id="KW-0028">Amino-acid biosynthesis</keyword>
<keyword id="KW-0055">Arginine biosynthesis</keyword>
<keyword id="KW-0963">Cytoplasm</keyword>
<keyword id="KW-0456">Lyase</keyword>
<accession>A2BND8</accession>
<proteinExistence type="inferred from homology"/>
<comment type="catalytic activity">
    <reaction evidence="1">
        <text>2-(N(omega)-L-arginino)succinate = fumarate + L-arginine</text>
        <dbReference type="Rhea" id="RHEA:24020"/>
        <dbReference type="ChEBI" id="CHEBI:29806"/>
        <dbReference type="ChEBI" id="CHEBI:32682"/>
        <dbReference type="ChEBI" id="CHEBI:57472"/>
        <dbReference type="EC" id="4.3.2.1"/>
    </reaction>
</comment>
<comment type="pathway">
    <text evidence="1">Amino-acid biosynthesis; L-arginine biosynthesis; L-arginine from L-ornithine and carbamoyl phosphate: step 3/3.</text>
</comment>
<comment type="subcellular location">
    <subcellularLocation>
        <location evidence="1">Cytoplasm</location>
    </subcellularLocation>
</comment>
<comment type="similarity">
    <text evidence="1">Belongs to the lyase 1 family. Argininosuccinate lyase subfamily.</text>
</comment>
<protein>
    <recommendedName>
        <fullName evidence="1">Argininosuccinate lyase</fullName>
        <shortName evidence="1">ASAL</shortName>
        <ecNumber evidence="1">4.3.2.1</ecNumber>
    </recommendedName>
    <alternativeName>
        <fullName evidence="1">Arginosuccinase</fullName>
    </alternativeName>
</protein>
<reference key="1">
    <citation type="journal article" date="2007" name="PLoS Genet.">
        <title>Patterns and implications of gene gain and loss in the evolution of Prochlorococcus.</title>
        <authorList>
            <person name="Kettler G.C."/>
            <person name="Martiny A.C."/>
            <person name="Huang K."/>
            <person name="Zucker J."/>
            <person name="Coleman M.L."/>
            <person name="Rodrigue S."/>
            <person name="Chen F."/>
            <person name="Lapidus A."/>
            <person name="Ferriera S."/>
            <person name="Johnson J."/>
            <person name="Steglich C."/>
            <person name="Church G.M."/>
            <person name="Richardson P."/>
            <person name="Chisholm S.W."/>
        </authorList>
    </citation>
    <scope>NUCLEOTIDE SEQUENCE [LARGE SCALE GENOMIC DNA]</scope>
    <source>
        <strain>AS9601</strain>
    </source>
</reference>
<dbReference type="EC" id="4.3.2.1" evidence="1"/>
<dbReference type="EMBL" id="CP000551">
    <property type="protein sequence ID" value="ABM69299.1"/>
    <property type="molecule type" value="Genomic_DNA"/>
</dbReference>
<dbReference type="RefSeq" id="WP_011817489.1">
    <property type="nucleotide sequence ID" value="NC_008816.1"/>
</dbReference>
<dbReference type="SMR" id="A2BND8"/>
<dbReference type="STRING" id="146891.A9601_00111"/>
<dbReference type="KEGG" id="pmb:A9601_00111"/>
<dbReference type="eggNOG" id="COG0165">
    <property type="taxonomic scope" value="Bacteria"/>
</dbReference>
<dbReference type="HOGENOM" id="CLU_027272_2_3_3"/>
<dbReference type="OrthoDB" id="9769623at2"/>
<dbReference type="UniPathway" id="UPA00068">
    <property type="reaction ID" value="UER00114"/>
</dbReference>
<dbReference type="Proteomes" id="UP000002590">
    <property type="component" value="Chromosome"/>
</dbReference>
<dbReference type="GO" id="GO:0005829">
    <property type="term" value="C:cytosol"/>
    <property type="evidence" value="ECO:0007669"/>
    <property type="project" value="TreeGrafter"/>
</dbReference>
<dbReference type="GO" id="GO:0004056">
    <property type="term" value="F:argininosuccinate lyase activity"/>
    <property type="evidence" value="ECO:0007669"/>
    <property type="project" value="UniProtKB-UniRule"/>
</dbReference>
<dbReference type="GO" id="GO:0042450">
    <property type="term" value="P:arginine biosynthetic process via ornithine"/>
    <property type="evidence" value="ECO:0007669"/>
    <property type="project" value="InterPro"/>
</dbReference>
<dbReference type="GO" id="GO:0006526">
    <property type="term" value="P:L-arginine biosynthetic process"/>
    <property type="evidence" value="ECO:0007669"/>
    <property type="project" value="UniProtKB-UniRule"/>
</dbReference>
<dbReference type="CDD" id="cd01359">
    <property type="entry name" value="Argininosuccinate_lyase"/>
    <property type="match status" value="1"/>
</dbReference>
<dbReference type="FunFam" id="1.10.40.30:FF:000001">
    <property type="entry name" value="Argininosuccinate lyase"/>
    <property type="match status" value="1"/>
</dbReference>
<dbReference type="FunFam" id="1.20.200.10:FF:000015">
    <property type="entry name" value="argininosuccinate lyase isoform X2"/>
    <property type="match status" value="1"/>
</dbReference>
<dbReference type="Gene3D" id="1.10.40.30">
    <property type="entry name" value="Fumarase/aspartase (C-terminal domain)"/>
    <property type="match status" value="1"/>
</dbReference>
<dbReference type="Gene3D" id="1.20.200.10">
    <property type="entry name" value="Fumarase/aspartase (Central domain)"/>
    <property type="match status" value="1"/>
</dbReference>
<dbReference type="Gene3D" id="1.10.275.10">
    <property type="entry name" value="Fumarase/aspartase (N-terminal domain)"/>
    <property type="match status" value="1"/>
</dbReference>
<dbReference type="HAMAP" id="MF_00006">
    <property type="entry name" value="Arg_succ_lyase"/>
    <property type="match status" value="1"/>
</dbReference>
<dbReference type="InterPro" id="IPR029419">
    <property type="entry name" value="Arg_succ_lyase_C"/>
</dbReference>
<dbReference type="InterPro" id="IPR009049">
    <property type="entry name" value="Argininosuccinate_lyase"/>
</dbReference>
<dbReference type="InterPro" id="IPR024083">
    <property type="entry name" value="Fumarase/histidase_N"/>
</dbReference>
<dbReference type="InterPro" id="IPR020557">
    <property type="entry name" value="Fumarate_lyase_CS"/>
</dbReference>
<dbReference type="InterPro" id="IPR000362">
    <property type="entry name" value="Fumarate_lyase_fam"/>
</dbReference>
<dbReference type="InterPro" id="IPR022761">
    <property type="entry name" value="Fumarate_lyase_N"/>
</dbReference>
<dbReference type="InterPro" id="IPR008948">
    <property type="entry name" value="L-Aspartase-like"/>
</dbReference>
<dbReference type="NCBIfam" id="TIGR00838">
    <property type="entry name" value="argH"/>
    <property type="match status" value="1"/>
</dbReference>
<dbReference type="PANTHER" id="PTHR43814">
    <property type="entry name" value="ARGININOSUCCINATE LYASE"/>
    <property type="match status" value="1"/>
</dbReference>
<dbReference type="PANTHER" id="PTHR43814:SF1">
    <property type="entry name" value="ARGININOSUCCINATE LYASE"/>
    <property type="match status" value="1"/>
</dbReference>
<dbReference type="Pfam" id="PF14698">
    <property type="entry name" value="ASL_C2"/>
    <property type="match status" value="1"/>
</dbReference>
<dbReference type="Pfam" id="PF00206">
    <property type="entry name" value="Lyase_1"/>
    <property type="match status" value="1"/>
</dbReference>
<dbReference type="PRINTS" id="PR00145">
    <property type="entry name" value="ARGSUCLYASE"/>
</dbReference>
<dbReference type="PRINTS" id="PR00149">
    <property type="entry name" value="FUMRATELYASE"/>
</dbReference>
<dbReference type="SUPFAM" id="SSF48557">
    <property type="entry name" value="L-aspartase-like"/>
    <property type="match status" value="1"/>
</dbReference>
<dbReference type="PROSITE" id="PS00163">
    <property type="entry name" value="FUMARATE_LYASES"/>
    <property type="match status" value="1"/>
</dbReference>
<organism>
    <name type="scientific">Prochlorococcus marinus (strain AS9601)</name>
    <dbReference type="NCBI Taxonomy" id="146891"/>
    <lineage>
        <taxon>Bacteria</taxon>
        <taxon>Bacillati</taxon>
        <taxon>Cyanobacteriota</taxon>
        <taxon>Cyanophyceae</taxon>
        <taxon>Synechococcales</taxon>
        <taxon>Prochlorococcaceae</taxon>
        <taxon>Prochlorococcus</taxon>
    </lineage>
</organism>
<sequence length="459" mass="52161">MAKVWSKRFDNALDTFIEKFNASIFFDRKLILEDLDCSIAHAKMLGKTEVLSSTEALQIINGLESIKVDYLEGKFSPGPPSEDIHYCIEEKLISLIGETGKKLHTGRSRNDQVGTDLRLWLRKEIDNNEILITDLQKSFLNLAKSNIYTLIPGYTHMQRAQPLSLAHHLLAYIEMLQRDRERFKEVRLRVNTSPLGAAALAGTKIKIDRHFTAAELGFEKIYKNSIDAVSDRDFCIEFVSASALLMSHLSKISEEIILWVTDEFSFAKLTDKCATGSSLMPQKKNPDVPELIRGKTGRVYGHLQALLTMVKGVPLSYNKDFQEDKEPIFDTAETISSCIKAMTILINQGIEFNVKNLSDSVENDFSNATDLADYLVGKDVPFRTAYQVVGEIVKYCLERKILFKNLKINEFKKFHPKFDEDVFLDLKPFNVVKSRNSEGGTGFVQVEKEVNNWQKKLLL</sequence>
<evidence type="ECO:0000255" key="1">
    <source>
        <dbReference type="HAMAP-Rule" id="MF_00006"/>
    </source>
</evidence>
<feature type="chain" id="PRO_1000000522" description="Argininosuccinate lyase">
    <location>
        <begin position="1"/>
        <end position="459"/>
    </location>
</feature>